<comment type="subunit">
    <text evidence="1">Part of the 30S ribosomal subunit.</text>
</comment>
<comment type="subcellular location">
    <subcellularLocation>
        <location>Plastid</location>
        <location>Chloroplast</location>
    </subcellularLocation>
</comment>
<comment type="similarity">
    <text evidence="2">Belongs to the universal ribosomal protein uS15 family.</text>
</comment>
<keyword id="KW-0150">Chloroplast</keyword>
<keyword id="KW-0934">Plastid</keyword>
<keyword id="KW-0687">Ribonucleoprotein</keyword>
<keyword id="KW-0689">Ribosomal protein</keyword>
<organism>
    <name type="scientific">Aethionema cordifolium</name>
    <name type="common">Lebanon stonecress</name>
    <dbReference type="NCBI Taxonomy" id="434059"/>
    <lineage>
        <taxon>Eukaryota</taxon>
        <taxon>Viridiplantae</taxon>
        <taxon>Streptophyta</taxon>
        <taxon>Embryophyta</taxon>
        <taxon>Tracheophyta</taxon>
        <taxon>Spermatophyta</taxon>
        <taxon>Magnoliopsida</taxon>
        <taxon>eudicotyledons</taxon>
        <taxon>Gunneridae</taxon>
        <taxon>Pentapetalae</taxon>
        <taxon>rosids</taxon>
        <taxon>malvids</taxon>
        <taxon>Brassicales</taxon>
        <taxon>Brassicaceae</taxon>
        <taxon>Aethionemeae</taxon>
        <taxon>Aethionema</taxon>
    </lineage>
</organism>
<geneLocation type="chloroplast"/>
<sequence length="88" mass="10742">MIKNSFISLQEKKDESRGSVEFQVFSFTNKIRRLTSHLELHRKDYLSQRGLRKILGKRQRLLVYLSKKNRVRYKELIHKLNIRQLKTR</sequence>
<protein>
    <recommendedName>
        <fullName evidence="2">Small ribosomal subunit protein uS15c</fullName>
    </recommendedName>
    <alternativeName>
        <fullName>30S ribosomal protein S15, chloroplastic</fullName>
    </alternativeName>
</protein>
<accession>A4QJH3</accession>
<evidence type="ECO:0000250" key="1"/>
<evidence type="ECO:0000305" key="2"/>
<dbReference type="EMBL" id="AP009366">
    <property type="protein sequence ID" value="BAF49828.1"/>
    <property type="molecule type" value="Genomic_DNA"/>
</dbReference>
<dbReference type="RefSeq" id="YP_001123003.1">
    <property type="nucleotide sequence ID" value="NC_009265.1"/>
</dbReference>
<dbReference type="SMR" id="A4QJH3"/>
<dbReference type="GeneID" id="4968660"/>
<dbReference type="GO" id="GO:0009507">
    <property type="term" value="C:chloroplast"/>
    <property type="evidence" value="ECO:0007669"/>
    <property type="project" value="UniProtKB-SubCell"/>
</dbReference>
<dbReference type="GO" id="GO:1990904">
    <property type="term" value="C:ribonucleoprotein complex"/>
    <property type="evidence" value="ECO:0007669"/>
    <property type="project" value="UniProtKB-KW"/>
</dbReference>
<dbReference type="GO" id="GO:0005840">
    <property type="term" value="C:ribosome"/>
    <property type="evidence" value="ECO:0007669"/>
    <property type="project" value="UniProtKB-KW"/>
</dbReference>
<dbReference type="GO" id="GO:0003735">
    <property type="term" value="F:structural constituent of ribosome"/>
    <property type="evidence" value="ECO:0007669"/>
    <property type="project" value="InterPro"/>
</dbReference>
<dbReference type="GO" id="GO:0006412">
    <property type="term" value="P:translation"/>
    <property type="evidence" value="ECO:0007669"/>
    <property type="project" value="UniProtKB-UniRule"/>
</dbReference>
<dbReference type="CDD" id="cd00353">
    <property type="entry name" value="Ribosomal_S15p_S13e"/>
    <property type="match status" value="1"/>
</dbReference>
<dbReference type="Gene3D" id="1.10.287.10">
    <property type="entry name" value="S15/NS1, RNA-binding"/>
    <property type="match status" value="1"/>
</dbReference>
<dbReference type="HAMAP" id="MF_01343_B">
    <property type="entry name" value="Ribosomal_uS15_B"/>
    <property type="match status" value="1"/>
</dbReference>
<dbReference type="InterPro" id="IPR000589">
    <property type="entry name" value="Ribosomal_uS15"/>
</dbReference>
<dbReference type="InterPro" id="IPR005290">
    <property type="entry name" value="Ribosomal_uS15_bac-type"/>
</dbReference>
<dbReference type="InterPro" id="IPR009068">
    <property type="entry name" value="uS15_NS1_RNA-bd_sf"/>
</dbReference>
<dbReference type="NCBIfam" id="TIGR00952">
    <property type="entry name" value="S15_bact"/>
    <property type="match status" value="1"/>
</dbReference>
<dbReference type="PANTHER" id="PTHR23321">
    <property type="entry name" value="RIBOSOMAL PROTEIN S15, BACTERIAL AND ORGANELLAR"/>
    <property type="match status" value="1"/>
</dbReference>
<dbReference type="PANTHER" id="PTHR23321:SF26">
    <property type="entry name" value="SMALL RIBOSOMAL SUBUNIT PROTEIN US15M"/>
    <property type="match status" value="1"/>
</dbReference>
<dbReference type="Pfam" id="PF00312">
    <property type="entry name" value="Ribosomal_S15"/>
    <property type="match status" value="1"/>
</dbReference>
<dbReference type="SMART" id="SM01387">
    <property type="entry name" value="Ribosomal_S15"/>
    <property type="match status" value="1"/>
</dbReference>
<dbReference type="SUPFAM" id="SSF47060">
    <property type="entry name" value="S15/NS1 RNA-binding domain"/>
    <property type="match status" value="1"/>
</dbReference>
<dbReference type="PROSITE" id="PS00362">
    <property type="entry name" value="RIBOSOMAL_S15"/>
    <property type="match status" value="1"/>
</dbReference>
<name>RR15_AETCO</name>
<gene>
    <name type="primary">rps15</name>
</gene>
<proteinExistence type="inferred from homology"/>
<reference key="1">
    <citation type="submission" date="2007-03" db="EMBL/GenBank/DDBJ databases">
        <title>Sequencing analysis of Aethionema coridifolium chloroplast DNA.</title>
        <authorList>
            <person name="Hosouchi T."/>
            <person name="Tsuruoka H."/>
            <person name="Kotani H."/>
        </authorList>
    </citation>
    <scope>NUCLEOTIDE SEQUENCE [LARGE SCALE GENOMIC DNA]</scope>
</reference>
<feature type="chain" id="PRO_0000354233" description="Small ribosomal subunit protein uS15c">
    <location>
        <begin position="1"/>
        <end position="88"/>
    </location>
</feature>